<dbReference type="EMBL" id="CP001489">
    <property type="protein sequence ID" value="ACO02744.1"/>
    <property type="molecule type" value="Genomic_DNA"/>
</dbReference>
<dbReference type="RefSeq" id="WP_002965682.1">
    <property type="nucleotide sequence ID" value="NC_012442.1"/>
</dbReference>
<dbReference type="SMR" id="C0RMB1"/>
<dbReference type="GeneID" id="97533017"/>
<dbReference type="KEGG" id="bmi:BMEA_B0952"/>
<dbReference type="HOGENOM" id="CLU_159258_0_1_5"/>
<dbReference type="Proteomes" id="UP000001748">
    <property type="component" value="Chromosome II"/>
</dbReference>
<dbReference type="GO" id="GO:1990904">
    <property type="term" value="C:ribonucleoprotein complex"/>
    <property type="evidence" value="ECO:0007669"/>
    <property type="project" value="UniProtKB-KW"/>
</dbReference>
<dbReference type="GO" id="GO:0005840">
    <property type="term" value="C:ribosome"/>
    <property type="evidence" value="ECO:0007669"/>
    <property type="project" value="UniProtKB-KW"/>
</dbReference>
<dbReference type="GO" id="GO:0003735">
    <property type="term" value="F:structural constituent of ribosome"/>
    <property type="evidence" value="ECO:0007669"/>
    <property type="project" value="InterPro"/>
</dbReference>
<dbReference type="GO" id="GO:0006412">
    <property type="term" value="P:translation"/>
    <property type="evidence" value="ECO:0007669"/>
    <property type="project" value="UniProtKB-UniRule"/>
</dbReference>
<dbReference type="Gene3D" id="1.20.5.1150">
    <property type="entry name" value="Ribosomal protein S8"/>
    <property type="match status" value="1"/>
</dbReference>
<dbReference type="HAMAP" id="MF_00358">
    <property type="entry name" value="Ribosomal_bS21"/>
    <property type="match status" value="1"/>
</dbReference>
<dbReference type="InterPro" id="IPR001911">
    <property type="entry name" value="Ribosomal_bS21"/>
</dbReference>
<dbReference type="InterPro" id="IPR018278">
    <property type="entry name" value="Ribosomal_bS21_CS"/>
</dbReference>
<dbReference type="InterPro" id="IPR038380">
    <property type="entry name" value="Ribosomal_bS21_sf"/>
</dbReference>
<dbReference type="NCBIfam" id="TIGR00030">
    <property type="entry name" value="S21p"/>
    <property type="match status" value="1"/>
</dbReference>
<dbReference type="PANTHER" id="PTHR21109">
    <property type="entry name" value="MITOCHONDRIAL 28S RIBOSOMAL PROTEIN S21"/>
    <property type="match status" value="1"/>
</dbReference>
<dbReference type="PANTHER" id="PTHR21109:SF0">
    <property type="entry name" value="SMALL RIBOSOMAL SUBUNIT PROTEIN BS21M"/>
    <property type="match status" value="1"/>
</dbReference>
<dbReference type="Pfam" id="PF01165">
    <property type="entry name" value="Ribosomal_S21"/>
    <property type="match status" value="1"/>
</dbReference>
<dbReference type="PRINTS" id="PR00976">
    <property type="entry name" value="RIBOSOMALS21"/>
</dbReference>
<dbReference type="PROSITE" id="PS01181">
    <property type="entry name" value="RIBOSOMAL_S21"/>
    <property type="match status" value="1"/>
</dbReference>
<gene>
    <name evidence="1" type="primary">rpsU</name>
    <name type="ordered locus">BMEA_B0952</name>
</gene>
<proteinExistence type="inferred from homology"/>
<evidence type="ECO:0000255" key="1">
    <source>
        <dbReference type="HAMAP-Rule" id="MF_00358"/>
    </source>
</evidence>
<evidence type="ECO:0000305" key="2"/>
<comment type="similarity">
    <text evidence="1">Belongs to the bacterial ribosomal protein bS21 family.</text>
</comment>
<organism>
    <name type="scientific">Brucella melitensis biotype 2 (strain ATCC 23457)</name>
    <dbReference type="NCBI Taxonomy" id="546272"/>
    <lineage>
        <taxon>Bacteria</taxon>
        <taxon>Pseudomonadati</taxon>
        <taxon>Pseudomonadota</taxon>
        <taxon>Alphaproteobacteria</taxon>
        <taxon>Hyphomicrobiales</taxon>
        <taxon>Brucellaceae</taxon>
        <taxon>Brucella/Ochrobactrum group</taxon>
        <taxon>Brucella</taxon>
    </lineage>
</organism>
<name>RS21_BRUMB</name>
<feature type="chain" id="PRO_1000194282" description="Small ribosomal subunit protein bS21">
    <location>
        <begin position="1"/>
        <end position="75"/>
    </location>
</feature>
<sequence length="75" mass="8817">MQVLVRDNNVDQALRALKKKMQREGIFREMKMRGHYEKPSEKRAREKAEAVRRARKLARKRAQREGLIGGRTGAR</sequence>
<protein>
    <recommendedName>
        <fullName evidence="1">Small ribosomal subunit protein bS21</fullName>
    </recommendedName>
    <alternativeName>
        <fullName evidence="2">30S ribosomal protein S21</fullName>
    </alternativeName>
</protein>
<reference key="1">
    <citation type="submission" date="2009-03" db="EMBL/GenBank/DDBJ databases">
        <title>Brucella melitensis ATCC 23457 whole genome shotgun sequencing project.</title>
        <authorList>
            <person name="Setubal J.C."/>
            <person name="Boyle S."/>
            <person name="Crasta O.R."/>
            <person name="Gillespie J.J."/>
            <person name="Kenyon R.W."/>
            <person name="Lu J."/>
            <person name="Mane S."/>
            <person name="Nagrani S."/>
            <person name="Shallom J.M."/>
            <person name="Shallom S."/>
            <person name="Shukla M."/>
            <person name="Snyder E.E."/>
            <person name="Sobral B.W."/>
            <person name="Wattam A.R."/>
            <person name="Will R."/>
            <person name="Williams K."/>
            <person name="Yoo H."/>
            <person name="Munk C."/>
            <person name="Tapia R."/>
            <person name="Han C."/>
            <person name="Detter J.C."/>
            <person name="Bruce D."/>
            <person name="Brettin T.S."/>
        </authorList>
    </citation>
    <scope>NUCLEOTIDE SEQUENCE [LARGE SCALE GENOMIC DNA]</scope>
    <source>
        <strain>ATCC 23457</strain>
    </source>
</reference>
<keyword id="KW-0687">Ribonucleoprotein</keyword>
<keyword id="KW-0689">Ribosomal protein</keyword>
<accession>C0RMB1</accession>